<accession>B1AJ46</accession>
<proteinExistence type="inferred from homology"/>
<dbReference type="EMBL" id="CP000942">
    <property type="protein sequence ID" value="ACA33008.1"/>
    <property type="molecule type" value="Genomic_DNA"/>
</dbReference>
<dbReference type="RefSeq" id="WP_006688590.1">
    <property type="nucleotide sequence ID" value="NC_010503.1"/>
</dbReference>
<dbReference type="SMR" id="B1AJ46"/>
<dbReference type="GeneID" id="29672340"/>
<dbReference type="KEGG" id="upa:UPA3_0423"/>
<dbReference type="HOGENOM" id="CLU_1277163_0_0_14"/>
<dbReference type="Proteomes" id="UP000002162">
    <property type="component" value="Chromosome"/>
</dbReference>
<dbReference type="GO" id="GO:0005737">
    <property type="term" value="C:cytoplasm"/>
    <property type="evidence" value="ECO:0007669"/>
    <property type="project" value="UniProtKB-SubCell"/>
</dbReference>
<dbReference type="GO" id="GO:0000774">
    <property type="term" value="F:adenyl-nucleotide exchange factor activity"/>
    <property type="evidence" value="ECO:0007669"/>
    <property type="project" value="InterPro"/>
</dbReference>
<dbReference type="GO" id="GO:0042803">
    <property type="term" value="F:protein homodimerization activity"/>
    <property type="evidence" value="ECO:0007669"/>
    <property type="project" value="InterPro"/>
</dbReference>
<dbReference type="GO" id="GO:0051087">
    <property type="term" value="F:protein-folding chaperone binding"/>
    <property type="evidence" value="ECO:0007669"/>
    <property type="project" value="InterPro"/>
</dbReference>
<dbReference type="GO" id="GO:0006457">
    <property type="term" value="P:protein folding"/>
    <property type="evidence" value="ECO:0007669"/>
    <property type="project" value="InterPro"/>
</dbReference>
<dbReference type="Gene3D" id="2.30.22.10">
    <property type="entry name" value="Head domain of nucleotide exchange factor GrpE"/>
    <property type="match status" value="1"/>
</dbReference>
<dbReference type="HAMAP" id="MF_01151">
    <property type="entry name" value="GrpE"/>
    <property type="match status" value="1"/>
</dbReference>
<dbReference type="InterPro" id="IPR000740">
    <property type="entry name" value="GrpE"/>
</dbReference>
<dbReference type="InterPro" id="IPR009012">
    <property type="entry name" value="GrpE_head"/>
</dbReference>
<dbReference type="Pfam" id="PF01025">
    <property type="entry name" value="GrpE"/>
    <property type="match status" value="1"/>
</dbReference>
<dbReference type="SUPFAM" id="SSF51064">
    <property type="entry name" value="Head domain of nucleotide exchange factor GrpE"/>
    <property type="match status" value="1"/>
</dbReference>
<protein>
    <recommendedName>
        <fullName evidence="1">Protein GrpE</fullName>
    </recommendedName>
    <alternativeName>
        <fullName evidence="1">HSP-70 cofactor</fullName>
    </alternativeName>
</protein>
<feature type="chain" id="PRO_1000085130" description="Protein GrpE">
    <location>
        <begin position="1"/>
        <end position="218"/>
    </location>
</feature>
<feature type="region of interest" description="Disordered" evidence="2">
    <location>
        <begin position="1"/>
        <end position="32"/>
    </location>
</feature>
<feature type="compositionally biased region" description="Basic and acidic residues" evidence="2">
    <location>
        <begin position="1"/>
        <end position="13"/>
    </location>
</feature>
<feature type="compositionally biased region" description="Basic and acidic residues" evidence="2">
    <location>
        <begin position="20"/>
        <end position="32"/>
    </location>
</feature>
<sequence length="218" mass="25637">MSKNNENIKHQNNDKVNNQVDKKETKNHNKQEFKYKELYEHELKKNKELQNINTLLKDKNQQLEEQISQLNQDFIKQLETKAKQAQQILEQKVNELEARHEAKVNDAVFKIFKFKMEPLLDAINHFTKIVNQNYDDPKIQAFIEGFKMFSQNMIDGLDNLKITKISPQVNDSLNDEIMEVFEVVENTNKPSMHVVEVISDGFKYNDKVIKFAVVKVAK</sequence>
<comment type="function">
    <text evidence="1">Participates actively in the response to hyperosmotic and heat shock by preventing the aggregation of stress-denatured proteins, in association with DnaK and GrpE. It is the nucleotide exchange factor for DnaK and may function as a thermosensor. Unfolded proteins bind initially to DnaJ; upon interaction with the DnaJ-bound protein, DnaK hydrolyzes its bound ATP, resulting in the formation of a stable complex. GrpE releases ADP from DnaK; ATP binding to DnaK triggers the release of the substrate protein, thus completing the reaction cycle. Several rounds of ATP-dependent interactions between DnaJ, DnaK and GrpE are required for fully efficient folding.</text>
</comment>
<comment type="subunit">
    <text evidence="1">Homodimer.</text>
</comment>
<comment type="subcellular location">
    <subcellularLocation>
        <location evidence="1">Cytoplasm</location>
    </subcellularLocation>
</comment>
<comment type="similarity">
    <text evidence="1">Belongs to the GrpE family.</text>
</comment>
<name>GRPE_UREP2</name>
<organism>
    <name type="scientific">Ureaplasma parvum serovar 3 (strain ATCC 27815 / 27 / NCTC 11736)</name>
    <dbReference type="NCBI Taxonomy" id="505682"/>
    <lineage>
        <taxon>Bacteria</taxon>
        <taxon>Bacillati</taxon>
        <taxon>Mycoplasmatota</taxon>
        <taxon>Mycoplasmoidales</taxon>
        <taxon>Mycoplasmoidaceae</taxon>
        <taxon>Ureaplasma</taxon>
    </lineage>
</organism>
<keyword id="KW-0143">Chaperone</keyword>
<keyword id="KW-0963">Cytoplasm</keyword>
<keyword id="KW-0346">Stress response</keyword>
<gene>
    <name evidence="1" type="primary">grpE</name>
    <name type="ordered locus">UPA3_0423</name>
</gene>
<evidence type="ECO:0000255" key="1">
    <source>
        <dbReference type="HAMAP-Rule" id="MF_01151"/>
    </source>
</evidence>
<evidence type="ECO:0000256" key="2">
    <source>
        <dbReference type="SAM" id="MobiDB-lite"/>
    </source>
</evidence>
<reference key="1">
    <citation type="submission" date="2008-02" db="EMBL/GenBank/DDBJ databases">
        <title>Genome sequence of Ureaplasma parvum serovar 3.</title>
        <authorList>
            <person name="Methe B.A."/>
            <person name="Glass J."/>
            <person name="Waites K."/>
            <person name="Shrivastava S."/>
        </authorList>
    </citation>
    <scope>NUCLEOTIDE SEQUENCE [LARGE SCALE GENOMIC DNA]</scope>
    <source>
        <strain>ATCC 27815 / 27 / NCTC 11736</strain>
    </source>
</reference>